<accession>B0SLC4</accession>
<reference key="1">
    <citation type="journal article" date="2008" name="PLoS ONE">
        <title>Genome sequence of the saprophyte Leptospira biflexa provides insights into the evolution of Leptospira and the pathogenesis of leptospirosis.</title>
        <authorList>
            <person name="Picardeau M."/>
            <person name="Bulach D.M."/>
            <person name="Bouchier C."/>
            <person name="Zuerner R.L."/>
            <person name="Zidane N."/>
            <person name="Wilson P.J."/>
            <person name="Creno S."/>
            <person name="Kuczek E.S."/>
            <person name="Bommezzadri S."/>
            <person name="Davis J.C."/>
            <person name="McGrath A."/>
            <person name="Johnson M.J."/>
            <person name="Boursaux-Eude C."/>
            <person name="Seemann T."/>
            <person name="Rouy Z."/>
            <person name="Coppel R.L."/>
            <person name="Rood J.I."/>
            <person name="Lajus A."/>
            <person name="Davies J.K."/>
            <person name="Medigue C."/>
            <person name="Adler B."/>
        </authorList>
    </citation>
    <scope>NUCLEOTIDE SEQUENCE [LARGE SCALE GENOMIC DNA]</scope>
    <source>
        <strain>Patoc 1 / ATCC 23582 / Paris</strain>
    </source>
</reference>
<evidence type="ECO:0000255" key="1">
    <source>
        <dbReference type="HAMAP-Rule" id="MF_01398"/>
    </source>
</evidence>
<sequence length="174" mass="19602">MVLLAASGFNLLKVNPGLVIWTLVTFSVVVFVLKKFAWDKILHALEERASGIQGDINKAESLRVEAEKSLKEYKDQLFKATEEAHRIVDEAKKDAVALRTKLTEEAHNEVKGIKDSAVREIELAKGRALSEIQNQIVEMSVLIASEILEKQLKKEDYASFVEKEIAKLDKLKIK</sequence>
<gene>
    <name evidence="1" type="primary">atpF</name>
    <name type="ordered locus">LEPBI_I0803</name>
</gene>
<keyword id="KW-0066">ATP synthesis</keyword>
<keyword id="KW-0997">Cell inner membrane</keyword>
<keyword id="KW-1003">Cell membrane</keyword>
<keyword id="KW-0138">CF(0)</keyword>
<keyword id="KW-0375">Hydrogen ion transport</keyword>
<keyword id="KW-0406">Ion transport</keyword>
<keyword id="KW-0472">Membrane</keyword>
<keyword id="KW-1185">Reference proteome</keyword>
<keyword id="KW-0812">Transmembrane</keyword>
<keyword id="KW-1133">Transmembrane helix</keyword>
<keyword id="KW-0813">Transport</keyword>
<comment type="function">
    <text evidence="1">F(1)F(0) ATP synthase produces ATP from ADP in the presence of a proton or sodium gradient. F-type ATPases consist of two structural domains, F(1) containing the extramembraneous catalytic core and F(0) containing the membrane proton channel, linked together by a central stalk and a peripheral stalk. During catalysis, ATP synthesis in the catalytic domain of F(1) is coupled via a rotary mechanism of the central stalk subunits to proton translocation.</text>
</comment>
<comment type="function">
    <text evidence="1">Component of the F(0) channel, it forms part of the peripheral stalk, linking F(1) to F(0).</text>
</comment>
<comment type="subunit">
    <text evidence="1">F-type ATPases have 2 components, F(1) - the catalytic core - and F(0) - the membrane proton channel. F(1) has five subunits: alpha(3), beta(3), gamma(1), delta(1), epsilon(1). F(0) has three main subunits: a(1), b(2) and c(10-14). The alpha and beta chains form an alternating ring which encloses part of the gamma chain. F(1) is attached to F(0) by a central stalk formed by the gamma and epsilon chains, while a peripheral stalk is formed by the delta and b chains.</text>
</comment>
<comment type="subcellular location">
    <subcellularLocation>
        <location evidence="1">Cell inner membrane</location>
        <topology evidence="1">Single-pass membrane protein</topology>
    </subcellularLocation>
</comment>
<comment type="similarity">
    <text evidence="1">Belongs to the ATPase B chain family.</text>
</comment>
<organism>
    <name type="scientific">Leptospira biflexa serovar Patoc (strain Patoc 1 / ATCC 23582 / Paris)</name>
    <dbReference type="NCBI Taxonomy" id="456481"/>
    <lineage>
        <taxon>Bacteria</taxon>
        <taxon>Pseudomonadati</taxon>
        <taxon>Spirochaetota</taxon>
        <taxon>Spirochaetia</taxon>
        <taxon>Leptospirales</taxon>
        <taxon>Leptospiraceae</taxon>
        <taxon>Leptospira</taxon>
    </lineage>
</organism>
<name>ATPF_LEPBP</name>
<feature type="chain" id="PRO_0000368559" description="ATP synthase subunit b">
    <location>
        <begin position="1"/>
        <end position="174"/>
    </location>
</feature>
<feature type="transmembrane region" description="Helical" evidence="1">
    <location>
        <begin position="15"/>
        <end position="33"/>
    </location>
</feature>
<proteinExistence type="inferred from homology"/>
<dbReference type="EMBL" id="CP000786">
    <property type="protein sequence ID" value="ABZ96931.1"/>
    <property type="molecule type" value="Genomic_DNA"/>
</dbReference>
<dbReference type="RefSeq" id="WP_012387816.1">
    <property type="nucleotide sequence ID" value="NC_010602.1"/>
</dbReference>
<dbReference type="SMR" id="B0SLC4"/>
<dbReference type="STRING" id="456481.LEPBI_I0803"/>
<dbReference type="KEGG" id="lbi:LEPBI_I0803"/>
<dbReference type="HOGENOM" id="CLU_079215_4_1_12"/>
<dbReference type="OrthoDB" id="308784at2"/>
<dbReference type="BioCyc" id="LBIF456481:LEPBI_RS03940-MONOMER"/>
<dbReference type="Proteomes" id="UP000001847">
    <property type="component" value="Chromosome I"/>
</dbReference>
<dbReference type="GO" id="GO:0005886">
    <property type="term" value="C:plasma membrane"/>
    <property type="evidence" value="ECO:0007669"/>
    <property type="project" value="UniProtKB-SubCell"/>
</dbReference>
<dbReference type="GO" id="GO:0045259">
    <property type="term" value="C:proton-transporting ATP synthase complex"/>
    <property type="evidence" value="ECO:0007669"/>
    <property type="project" value="UniProtKB-KW"/>
</dbReference>
<dbReference type="GO" id="GO:0046933">
    <property type="term" value="F:proton-transporting ATP synthase activity, rotational mechanism"/>
    <property type="evidence" value="ECO:0007669"/>
    <property type="project" value="UniProtKB-UniRule"/>
</dbReference>
<dbReference type="GO" id="GO:0046961">
    <property type="term" value="F:proton-transporting ATPase activity, rotational mechanism"/>
    <property type="evidence" value="ECO:0007669"/>
    <property type="project" value="TreeGrafter"/>
</dbReference>
<dbReference type="CDD" id="cd06503">
    <property type="entry name" value="ATP-synt_Fo_b"/>
    <property type="match status" value="1"/>
</dbReference>
<dbReference type="Gene3D" id="1.20.5.620">
    <property type="entry name" value="F1F0 ATP synthase subunit B, membrane domain"/>
    <property type="match status" value="1"/>
</dbReference>
<dbReference type="HAMAP" id="MF_01398">
    <property type="entry name" value="ATP_synth_b_bprime"/>
    <property type="match status" value="1"/>
</dbReference>
<dbReference type="InterPro" id="IPR028987">
    <property type="entry name" value="ATP_synth_B-like_membr_sf"/>
</dbReference>
<dbReference type="InterPro" id="IPR002146">
    <property type="entry name" value="ATP_synth_b/b'su_bac/chlpt"/>
</dbReference>
<dbReference type="InterPro" id="IPR005864">
    <property type="entry name" value="ATP_synth_F0_bsu_bac"/>
</dbReference>
<dbReference type="InterPro" id="IPR050059">
    <property type="entry name" value="ATP_synthase_B_chain"/>
</dbReference>
<dbReference type="NCBIfam" id="TIGR01144">
    <property type="entry name" value="ATP_synt_b"/>
    <property type="match status" value="1"/>
</dbReference>
<dbReference type="NCBIfam" id="NF009991">
    <property type="entry name" value="PRK13460.1"/>
    <property type="match status" value="1"/>
</dbReference>
<dbReference type="PANTHER" id="PTHR33445:SF1">
    <property type="entry name" value="ATP SYNTHASE SUBUNIT B"/>
    <property type="match status" value="1"/>
</dbReference>
<dbReference type="PANTHER" id="PTHR33445">
    <property type="entry name" value="ATP SYNTHASE SUBUNIT B', CHLOROPLASTIC"/>
    <property type="match status" value="1"/>
</dbReference>
<dbReference type="Pfam" id="PF00430">
    <property type="entry name" value="ATP-synt_B"/>
    <property type="match status" value="1"/>
</dbReference>
<dbReference type="SUPFAM" id="SSF81573">
    <property type="entry name" value="F1F0 ATP synthase subunit B, membrane domain"/>
    <property type="match status" value="1"/>
</dbReference>
<protein>
    <recommendedName>
        <fullName evidence="1">ATP synthase subunit b</fullName>
    </recommendedName>
    <alternativeName>
        <fullName evidence="1">ATP synthase F(0) sector subunit b</fullName>
    </alternativeName>
    <alternativeName>
        <fullName evidence="1">ATPase subunit I</fullName>
    </alternativeName>
    <alternativeName>
        <fullName evidence="1">F-type ATPase subunit b</fullName>
        <shortName evidence="1">F-ATPase subunit b</shortName>
    </alternativeName>
</protein>